<name>AZOR_GLUOX</name>
<protein>
    <recommendedName>
        <fullName evidence="1">FMN-dependent NADH:quinone oxidoreductase</fullName>
        <ecNumber evidence="1">1.6.5.-</ecNumber>
    </recommendedName>
    <alternativeName>
        <fullName evidence="1">Azo-dye reductase</fullName>
    </alternativeName>
    <alternativeName>
        <fullName evidence="1">FMN-dependent NADH-azo compound oxidoreductase</fullName>
    </alternativeName>
    <alternativeName>
        <fullName evidence="1">FMN-dependent NADH-azoreductase</fullName>
        <ecNumber evidence="1">1.7.1.17</ecNumber>
    </alternativeName>
</protein>
<reference key="1">
    <citation type="journal article" date="2005" name="Nat. Biotechnol.">
        <title>Complete genome sequence of the acetic acid bacterium Gluconobacter oxydans.</title>
        <authorList>
            <person name="Prust C."/>
            <person name="Hoffmeister M."/>
            <person name="Liesegang H."/>
            <person name="Wiezer A."/>
            <person name="Fricke W.F."/>
            <person name="Ehrenreich A."/>
            <person name="Gottschalk G."/>
            <person name="Deppenmeier U."/>
        </authorList>
    </citation>
    <scope>NUCLEOTIDE SEQUENCE [LARGE SCALE GENOMIC DNA]</scope>
    <source>
        <strain>621H</strain>
    </source>
</reference>
<accession>Q5FSL0</accession>
<comment type="function">
    <text evidence="1">Quinone reductase that provides resistance to thiol-specific stress caused by electrophilic quinones.</text>
</comment>
<comment type="function">
    <text evidence="1">Also exhibits azoreductase activity. Catalyzes the reductive cleavage of the azo bond in aromatic azo compounds to the corresponding amines.</text>
</comment>
<comment type="catalytic activity">
    <reaction evidence="1">
        <text>2 a quinone + NADH + H(+) = 2 a 1,4-benzosemiquinone + NAD(+)</text>
        <dbReference type="Rhea" id="RHEA:65952"/>
        <dbReference type="ChEBI" id="CHEBI:15378"/>
        <dbReference type="ChEBI" id="CHEBI:57540"/>
        <dbReference type="ChEBI" id="CHEBI:57945"/>
        <dbReference type="ChEBI" id="CHEBI:132124"/>
        <dbReference type="ChEBI" id="CHEBI:134225"/>
    </reaction>
</comment>
<comment type="catalytic activity">
    <reaction evidence="1">
        <text>N,N-dimethyl-1,4-phenylenediamine + anthranilate + 2 NAD(+) = 2-(4-dimethylaminophenyl)diazenylbenzoate + 2 NADH + 2 H(+)</text>
        <dbReference type="Rhea" id="RHEA:55872"/>
        <dbReference type="ChEBI" id="CHEBI:15378"/>
        <dbReference type="ChEBI" id="CHEBI:15783"/>
        <dbReference type="ChEBI" id="CHEBI:16567"/>
        <dbReference type="ChEBI" id="CHEBI:57540"/>
        <dbReference type="ChEBI" id="CHEBI:57945"/>
        <dbReference type="ChEBI" id="CHEBI:71579"/>
        <dbReference type="EC" id="1.7.1.17"/>
    </reaction>
</comment>
<comment type="cofactor">
    <cofactor evidence="1">
        <name>FMN</name>
        <dbReference type="ChEBI" id="CHEBI:58210"/>
    </cofactor>
    <text evidence="1">Binds 1 FMN per subunit.</text>
</comment>
<comment type="subunit">
    <text evidence="1">Homodimer.</text>
</comment>
<comment type="similarity">
    <text evidence="1">Belongs to the azoreductase type 1 family.</text>
</comment>
<dbReference type="EC" id="1.6.5.-" evidence="1"/>
<dbReference type="EC" id="1.7.1.17" evidence="1"/>
<dbReference type="EMBL" id="CP000009">
    <property type="protein sequence ID" value="AAW60636.1"/>
    <property type="molecule type" value="Genomic_DNA"/>
</dbReference>
<dbReference type="RefSeq" id="WP_011252432.1">
    <property type="nucleotide sequence ID" value="NC_006677.1"/>
</dbReference>
<dbReference type="SMR" id="Q5FSL0"/>
<dbReference type="STRING" id="290633.GOX0862"/>
<dbReference type="KEGG" id="gox:GOX0862"/>
<dbReference type="eggNOG" id="COG1182">
    <property type="taxonomic scope" value="Bacteria"/>
</dbReference>
<dbReference type="HOGENOM" id="CLU_088964_0_0_5"/>
<dbReference type="Proteomes" id="UP000006375">
    <property type="component" value="Chromosome"/>
</dbReference>
<dbReference type="GO" id="GO:0009055">
    <property type="term" value="F:electron transfer activity"/>
    <property type="evidence" value="ECO:0007669"/>
    <property type="project" value="UniProtKB-UniRule"/>
</dbReference>
<dbReference type="GO" id="GO:0010181">
    <property type="term" value="F:FMN binding"/>
    <property type="evidence" value="ECO:0007669"/>
    <property type="project" value="UniProtKB-UniRule"/>
</dbReference>
<dbReference type="GO" id="GO:0016652">
    <property type="term" value="F:oxidoreductase activity, acting on NAD(P)H as acceptor"/>
    <property type="evidence" value="ECO:0007669"/>
    <property type="project" value="UniProtKB-UniRule"/>
</dbReference>
<dbReference type="GO" id="GO:0016655">
    <property type="term" value="F:oxidoreductase activity, acting on NAD(P)H, quinone or similar compound as acceptor"/>
    <property type="evidence" value="ECO:0007669"/>
    <property type="project" value="InterPro"/>
</dbReference>
<dbReference type="Gene3D" id="3.40.50.360">
    <property type="match status" value="1"/>
</dbReference>
<dbReference type="HAMAP" id="MF_01216">
    <property type="entry name" value="Azoreductase_type1"/>
    <property type="match status" value="1"/>
</dbReference>
<dbReference type="InterPro" id="IPR003680">
    <property type="entry name" value="Flavodoxin_fold"/>
</dbReference>
<dbReference type="InterPro" id="IPR029039">
    <property type="entry name" value="Flavoprotein-like_sf"/>
</dbReference>
<dbReference type="InterPro" id="IPR050104">
    <property type="entry name" value="FMN-dep_NADH:Q_OxRdtase_AzoR1"/>
</dbReference>
<dbReference type="InterPro" id="IPR023048">
    <property type="entry name" value="NADH:quinone_OxRdtase_FMN_depd"/>
</dbReference>
<dbReference type="PANTHER" id="PTHR43741">
    <property type="entry name" value="FMN-DEPENDENT NADH-AZOREDUCTASE 1"/>
    <property type="match status" value="1"/>
</dbReference>
<dbReference type="PANTHER" id="PTHR43741:SF4">
    <property type="entry name" value="FMN-DEPENDENT NADH:QUINONE OXIDOREDUCTASE"/>
    <property type="match status" value="1"/>
</dbReference>
<dbReference type="Pfam" id="PF02525">
    <property type="entry name" value="Flavodoxin_2"/>
    <property type="match status" value="1"/>
</dbReference>
<dbReference type="SUPFAM" id="SSF52218">
    <property type="entry name" value="Flavoproteins"/>
    <property type="match status" value="1"/>
</dbReference>
<evidence type="ECO:0000255" key="1">
    <source>
        <dbReference type="HAMAP-Rule" id="MF_01216"/>
    </source>
</evidence>
<keyword id="KW-0285">Flavoprotein</keyword>
<keyword id="KW-0288">FMN</keyword>
<keyword id="KW-0520">NAD</keyword>
<keyword id="KW-0560">Oxidoreductase</keyword>
<keyword id="KW-1185">Reference proteome</keyword>
<sequence>MKLLHIDSSILGDSSASRHVSAAAVAQFRKKDPSVEVISLDLASDPLPHLDVEALSWLGKDLTPDVSGRPELIAGANALKDFKAADIVVIGVPMYNLSIPSQLKAWIDRIMVAGQTFRYTSGGGIEGLAKGKKVVLAVARGGLYGEGSPAASFEHQLSYLKSVFAMIGITDLTVIEAEGLATNGGADRARILSDAEQKASAL</sequence>
<proteinExistence type="inferred from homology"/>
<organism>
    <name type="scientific">Gluconobacter oxydans (strain 621H)</name>
    <name type="common">Gluconobacter suboxydans</name>
    <dbReference type="NCBI Taxonomy" id="290633"/>
    <lineage>
        <taxon>Bacteria</taxon>
        <taxon>Pseudomonadati</taxon>
        <taxon>Pseudomonadota</taxon>
        <taxon>Alphaproteobacteria</taxon>
        <taxon>Acetobacterales</taxon>
        <taxon>Acetobacteraceae</taxon>
        <taxon>Gluconobacter</taxon>
    </lineage>
</organism>
<gene>
    <name evidence="1" type="primary">azoR</name>
    <name type="ordered locus">GOX0862</name>
</gene>
<feature type="chain" id="PRO_0000245919" description="FMN-dependent NADH:quinone oxidoreductase">
    <location>
        <begin position="1"/>
        <end position="202"/>
    </location>
</feature>
<feature type="binding site" evidence="1">
    <location>
        <position position="9"/>
    </location>
    <ligand>
        <name>FMN</name>
        <dbReference type="ChEBI" id="CHEBI:58210"/>
    </ligand>
</feature>
<feature type="binding site" evidence="1">
    <location>
        <begin position="15"/>
        <end position="17"/>
    </location>
    <ligand>
        <name>FMN</name>
        <dbReference type="ChEBI" id="CHEBI:58210"/>
    </ligand>
</feature>
<feature type="binding site" evidence="1">
    <location>
        <begin position="94"/>
        <end position="97"/>
    </location>
    <ligand>
        <name>FMN</name>
        <dbReference type="ChEBI" id="CHEBI:58210"/>
    </ligand>
</feature>